<organism>
    <name type="scientific">Escherichia coli</name>
    <dbReference type="NCBI Taxonomy" id="562"/>
    <lineage>
        <taxon>Bacteria</taxon>
        <taxon>Pseudomonadati</taxon>
        <taxon>Pseudomonadota</taxon>
        <taxon>Gammaproteobacteria</taxon>
        <taxon>Enterobacterales</taxon>
        <taxon>Enterobacteriaceae</taxon>
        <taxon>Escherichia</taxon>
    </lineage>
</organism>
<accession>Q47098</accession>
<accession>Q46983</accession>
<dbReference type="EC" id="4.1.2.52"/>
<dbReference type="EMBL" id="Z47799">
    <property type="protein sequence ID" value="CAA87759.1"/>
    <property type="molecule type" value="Genomic_DNA"/>
</dbReference>
<dbReference type="EMBL" id="Z37980">
    <property type="protein sequence ID" value="CAA86045.1"/>
    <property type="molecule type" value="Genomic_DNA"/>
</dbReference>
<dbReference type="PIR" id="S49311">
    <property type="entry name" value="S49311"/>
</dbReference>
<dbReference type="RefSeq" id="WP_000431706.1">
    <property type="nucleotide sequence ID" value="NZ_WVVQ01000010.1"/>
</dbReference>
<dbReference type="PDB" id="2V5J">
    <property type="method" value="X-ray"/>
    <property type="resolution" value="1.60 A"/>
    <property type="chains" value="A/B=1-262"/>
</dbReference>
<dbReference type="PDB" id="2V5K">
    <property type="method" value="X-ray"/>
    <property type="resolution" value="2.20 A"/>
    <property type="chains" value="A/B=1-262"/>
</dbReference>
<dbReference type="PDBsum" id="2V5J"/>
<dbReference type="PDBsum" id="2V5K"/>
<dbReference type="SMR" id="Q47098"/>
<dbReference type="STRING" id="585034.ECIAI1_4570"/>
<dbReference type="GeneID" id="75202969"/>
<dbReference type="eggNOG" id="COG3836">
    <property type="taxonomic scope" value="Bacteria"/>
</dbReference>
<dbReference type="OMA" id="WNRVDDY"/>
<dbReference type="BioCyc" id="MetaCyc:MONOMER-2849"/>
<dbReference type="BRENDA" id="4.1.2.52">
    <property type="organism ID" value="2026"/>
</dbReference>
<dbReference type="BRENDA" id="4.1.3.39">
    <property type="organism ID" value="2026"/>
</dbReference>
<dbReference type="SABIO-RK" id="Q47098"/>
<dbReference type="UniPathway" id="UPA00208">
    <property type="reaction ID" value="UER00422"/>
</dbReference>
<dbReference type="EvolutionaryTrace" id="Q47098"/>
<dbReference type="GO" id="GO:0005737">
    <property type="term" value="C:cytoplasm"/>
    <property type="evidence" value="ECO:0007669"/>
    <property type="project" value="TreeGrafter"/>
</dbReference>
<dbReference type="GO" id="GO:0043863">
    <property type="term" value="F:4-hydroxy-2-ketopimelate aldolase activity"/>
    <property type="evidence" value="ECO:0007669"/>
    <property type="project" value="RHEA"/>
</dbReference>
<dbReference type="GO" id="GO:0046872">
    <property type="term" value="F:metal ion binding"/>
    <property type="evidence" value="ECO:0007669"/>
    <property type="project" value="UniProtKB-UniRule"/>
</dbReference>
<dbReference type="GO" id="GO:1901023">
    <property type="term" value="P:4-hydroxyphenylacetate catabolic process"/>
    <property type="evidence" value="ECO:0007669"/>
    <property type="project" value="UniProtKB-UniRule"/>
</dbReference>
<dbReference type="GO" id="GO:0010124">
    <property type="term" value="P:phenylacetate catabolic process"/>
    <property type="evidence" value="ECO:0007669"/>
    <property type="project" value="InterPro"/>
</dbReference>
<dbReference type="FunFam" id="3.20.20.60:FF:000004">
    <property type="entry name" value="5-keto-4-deoxy-D-glucarate aldolase"/>
    <property type="match status" value="1"/>
</dbReference>
<dbReference type="Gene3D" id="3.20.20.60">
    <property type="entry name" value="Phosphoenolpyruvate-binding domains"/>
    <property type="match status" value="1"/>
</dbReference>
<dbReference type="HAMAP" id="MF_01292">
    <property type="entry name" value="HKHD_aldolase"/>
    <property type="match status" value="1"/>
</dbReference>
<dbReference type="InterPro" id="IPR005000">
    <property type="entry name" value="Aldolase/citrate-lyase_domain"/>
</dbReference>
<dbReference type="InterPro" id="IPR023701">
    <property type="entry name" value="HKHD_aldolase_ent"/>
</dbReference>
<dbReference type="InterPro" id="IPR012689">
    <property type="entry name" value="HpaI"/>
</dbReference>
<dbReference type="InterPro" id="IPR050251">
    <property type="entry name" value="HpcH-HpaI_aldolase"/>
</dbReference>
<dbReference type="InterPro" id="IPR015813">
    <property type="entry name" value="Pyrv/PenolPyrv_kinase-like_dom"/>
</dbReference>
<dbReference type="InterPro" id="IPR040442">
    <property type="entry name" value="Pyrv_kinase-like_dom_sf"/>
</dbReference>
<dbReference type="NCBIfam" id="TIGR02311">
    <property type="entry name" value="HpaI"/>
    <property type="match status" value="1"/>
</dbReference>
<dbReference type="PANTHER" id="PTHR30502">
    <property type="entry name" value="2-KETO-3-DEOXY-L-RHAMNONATE ALDOLASE"/>
    <property type="match status" value="1"/>
</dbReference>
<dbReference type="PANTHER" id="PTHR30502:SF0">
    <property type="entry name" value="PHOSPHOENOLPYRUVATE CARBOXYLASE FAMILY PROTEIN"/>
    <property type="match status" value="1"/>
</dbReference>
<dbReference type="Pfam" id="PF03328">
    <property type="entry name" value="HpcH_HpaI"/>
    <property type="match status" value="1"/>
</dbReference>
<dbReference type="SUPFAM" id="SSF51621">
    <property type="entry name" value="Phosphoenolpyruvate/pyruvate domain"/>
    <property type="match status" value="1"/>
</dbReference>
<name>HPCH_ECOLX</name>
<comment type="function">
    <text evidence="1 4">Catalyzes the reversible retro-aldol cleavage of 4-hydroxy-2-ketoheptane-1,7-dioate (HKHD) to pyruvate and succinate semialdehyde. Is also able to catalyze the aldol cleavage of 4-hydroxy-2-ketopentanoate and 4-hydroxy-2-ketohexanoate. Is not stereospecific since it can cleave both substrate enantiomers. Also exhibits significant oxaloacetate decarboxylase activity in vitro. In the reverse direction, is able to condense a range of aldehyde acceptors (from two to five carbons in length) with pyruvate or 2-oxobutanoate. Unlike with BphI from Burkholderia xenovorans, the aldol addition reaction lacks stereospecificity, producing a racemic mixture.</text>
</comment>
<comment type="catalytic activity">
    <reaction>
        <text>4-hydroxy-2-oxoheptanedioate = succinate semialdehyde + pyruvate</text>
        <dbReference type="Rhea" id="RHEA:25788"/>
        <dbReference type="ChEBI" id="CHEBI:15361"/>
        <dbReference type="ChEBI" id="CHEBI:57706"/>
        <dbReference type="ChEBI" id="CHEBI:73036"/>
        <dbReference type="EC" id="4.1.2.52"/>
    </reaction>
</comment>
<comment type="cofactor">
    <cofactor evidence="1">
        <name>Co(2+)</name>
        <dbReference type="ChEBI" id="CHEBI:48828"/>
    </cofactor>
    <cofactor evidence="1">
        <name>Mn(2+)</name>
        <dbReference type="ChEBI" id="CHEBI:29035"/>
    </cofactor>
    <cofactor evidence="1">
        <name>Zn(2+)</name>
        <dbReference type="ChEBI" id="CHEBI:29105"/>
    </cofactor>
    <cofactor evidence="1">
        <name>Fe(2+)</name>
        <dbReference type="ChEBI" id="CHEBI:29033"/>
    </cofactor>
    <cofactor evidence="1">
        <name>Mg(2+)</name>
        <dbReference type="ChEBI" id="CHEBI:18420"/>
    </cofactor>
    <text evidence="1">Binds 1 divalent metal cation per subunit. Has the highest activity with Co(2+) and Mn(2+), but can also use Zn(2+), Fe(2+) and Mg(2+).</text>
</comment>
<comment type="activity regulation">
    <text evidence="1">Competitively inhibited by oxalate.</text>
</comment>
<comment type="biophysicochemical properties">
    <kinetics>
        <KM evidence="1">0.38 mM for 4-hydroxy-2-ketopentanoate</KM>
        <KM evidence="1">0.16 mM for 4-hydroxy-2-ketohexanoate</KM>
        <KM evidence="1">14.22 mM for 3-deoxy-D-manno-oct-2-ulosonate (KDO)</KM>
        <KM evidence="1 4">1.37 mM for oxaloacetate</KM>
        <KM evidence="4">9.1 mM for succinate semialdehyde</KM>
        <KM evidence="4">62.9 mM for acetaldehyde</KM>
        <KM evidence="4">33.3 mM for glycolaldehyde</KM>
        <KM evidence="4">32.9 mM for propanaldehyde</KM>
        <KM evidence="1">6 uM for Co(2+)</KM>
        <KM evidence="1">17.5 uM for Mn(2+)</KM>
        <KM evidence="1">289.3 uM for Mg(2+)</KM>
        <text evidence="1">The catalytic efficiency measured with 3-deoxy-D-manno-oct-2-ulosonate (KDO) is 37800-fold lower than that with 4-hydroxy-2-ketohexanoate.</text>
    </kinetics>
</comment>
<comment type="pathway">
    <text>Aromatic compound metabolism; 4-hydroxyphenylacetate degradation; pyruvate and succinate semialdehyde from 4-hydroxyphenylacetate: step 7/7.</text>
</comment>
<comment type="subunit">
    <text evidence="2">Homohexamer; trimer of dimers.</text>
</comment>
<comment type="miscellaneous">
    <text>The aldol addition reaction proceeds via a rapid equilibrium random order mechanism.</text>
</comment>
<comment type="similarity">
    <text evidence="5">Belongs to the HpcH/HpaI aldolase family.</text>
</comment>
<evidence type="ECO:0000269" key="1">
    <source>
    </source>
</evidence>
<evidence type="ECO:0000269" key="2">
    <source>
    </source>
</evidence>
<evidence type="ECO:0000269" key="3">
    <source>
    </source>
</evidence>
<evidence type="ECO:0000269" key="4">
    <source>
    </source>
</evidence>
<evidence type="ECO:0000305" key="5"/>
<evidence type="ECO:0000305" key="6">
    <source>
    </source>
</evidence>
<evidence type="ECO:0007829" key="7">
    <source>
        <dbReference type="PDB" id="2V5J"/>
    </source>
</evidence>
<keyword id="KW-0002">3D-structure</keyword>
<keyword id="KW-0058">Aromatic hydrocarbons catabolism</keyword>
<keyword id="KW-0170">Cobalt</keyword>
<keyword id="KW-0903">Direct protein sequencing</keyword>
<keyword id="KW-0408">Iron</keyword>
<keyword id="KW-0456">Lyase</keyword>
<keyword id="KW-0460">Magnesium</keyword>
<keyword id="KW-0464">Manganese</keyword>
<keyword id="KW-0479">Metal-binding</keyword>
<keyword id="KW-0862">Zinc</keyword>
<protein>
    <recommendedName>
        <fullName>4-hydroxy-2-oxo-heptane-1,7-dioate aldolase</fullName>
        <ecNumber>4.1.2.52</ecNumber>
    </recommendedName>
    <alternativeName>
        <fullName>2,4-dihydroxyhept-2-ene-1,7-dioic acid aldolase</fullName>
        <shortName>HHED aldolase</shortName>
    </alternativeName>
    <alternativeName>
        <fullName>4-hydroxy-2-ketoheptane-1,7-dioate aldolase</fullName>
        <shortName>HKHD aldolase</shortName>
    </alternativeName>
</protein>
<gene>
    <name type="primary">hpcH</name>
    <name type="synonym">hpaI</name>
</gene>
<reference key="1">
    <citation type="journal article" date="1995" name="Gene">
        <title>Sequence of the Escherichia coli C homoprotocatechuic acid degradative operon completed with that of the 2,4-dihydroxyhept-2-ene-1,7-dioic acid aldolase-encoding gene (hpcH).</title>
        <authorList>
            <person name="Stringfellow J.M."/>
            <person name="Turpin B."/>
            <person name="Cooper R.A."/>
        </authorList>
    </citation>
    <scope>NUCLEOTIDE SEQUENCE [GENOMIC DNA]</scope>
    <scope>PROTEIN SEQUENCE OF 1-10</scope>
    <source>
        <strain>C</strain>
    </source>
</reference>
<reference key="2">
    <citation type="journal article" date="1996" name="J. Bacteriol.">
        <title>Molecular characterization of the 4-hydroxyphenylacetate catabolic pathway of Escherichia coli W: engineering a mobile aromatic degradative cluster.</title>
        <authorList>
            <person name="Prieto M.A."/>
            <person name="Diaz E."/>
            <person name="Garcia J.L."/>
        </authorList>
    </citation>
    <scope>NUCLEOTIDE SEQUENCE [GENOMIC DNA]</scope>
    <source>
        <strain>W / ATCC 11105 / DSM 1900 / 113-3</strain>
    </source>
</reference>
<reference key="3">
    <citation type="journal article" date="2005" name="Acta Crystallogr. F">
        <title>Expression, purification and preliminary crystallographic analysis of 2,4-dihydroxy-hepta-2-ene-1,7-dioate aldolase (HpcH) from Escherichia coli C.</title>
        <authorList>
            <person name="Rea D."/>
            <person name="Fueloep V."/>
            <person name="Bugg T.D.H."/>
            <person name="Roper D.I."/>
        </authorList>
    </citation>
    <scope>CRYSTALLIZATION</scope>
    <source>
        <strain>C</strain>
    </source>
</reference>
<reference key="4">
    <citation type="journal article" date="2005" name="Biochemistry">
        <title>Purification and biochemical characterization of a pyruvate-specific class II aldolase, HpaI.</title>
        <authorList>
            <person name="Wang W."/>
            <person name="Seah S.Y.K."/>
        </authorList>
    </citation>
    <scope>FUNCTION</scope>
    <scope>COFACTOR</scope>
    <scope>SUBSTRATE SPECIFICITY</scope>
    <scope>KINETIC PARAMETERS</scope>
    <scope>ACTIVITY REGULATION</scope>
    <scope>MUTAGENESIS OF ARG-70</scope>
</reference>
<reference key="5">
    <citation type="journal article" date="2008" name="FEBS Lett.">
        <title>The role of a conserved histidine residue in a pyruvate-specific Class II aldolase.</title>
        <authorList>
            <person name="Wang W."/>
            <person name="Seah S.Y.K."/>
        </authorList>
    </citation>
    <scope>MUTAGENESIS OF HIS-45</scope>
    <scope>ACTIVE SITE</scope>
</reference>
<reference key="6">
    <citation type="journal article" date="2010" name="Biochemistry">
        <title>Comparison of two metal-dependent pyruvate aldolases related by convergent evolution: substrate specificity, kinetic mechanism, and substrate channeling.</title>
        <authorList>
            <person name="Wang W."/>
            <person name="Baker P."/>
            <person name="Seah S.Y."/>
        </authorList>
    </citation>
    <scope>FUNCTION</scope>
    <scope>SUBSTRATE SPECIFICITY</scope>
    <scope>STEREOSPECIFICITY</scope>
    <scope>KINETIC PARAMETERS</scope>
    <scope>KINETIC MECHANISM</scope>
</reference>
<reference key="7">
    <citation type="journal article" date="2007" name="J. Mol. Biol.">
        <title>Structure and mechanism of HpcH: a metal ion dependent class II aldolase from the homoprotocatechuate degradation pathway of Escherichia coli.</title>
        <authorList>
            <person name="Rea D."/>
            <person name="Fueloep V."/>
            <person name="Bugg T.D.H."/>
            <person name="Roper D.I."/>
        </authorList>
    </citation>
    <scope>X-RAY CRYSTALLOGRAPHY (1.6 ANGSTROMS) OF APOENZYME AND IN COMPLEX WITH MAGNESIUM AND SUBSTRATE ANALOG</scope>
    <scope>SUBUNIT</scope>
    <scope>CATALYTIC MECHANISM</scope>
    <scope>MUTAGENESIS OF HIS-45</scope>
    <source>
        <strain>C</strain>
    </source>
</reference>
<sequence>MENSFKAALKAGRPQIGLWLGLSSSYSAELLAGAGFDWLLIDGEHAPNNVQTVLTQLQAIAPYPSQPVVRPSWNDPVQIKQLLDVGTQTLLVPMVQNADEAREAVRATRYPPAGIRGVGSALARASRWNRIPDYLQKANDQMCVLVQIETREAMKNLPQILDVEGVDGVFIGPADLSADMGYAGNPQHPEVQAAIEQAIVQIRESGKAPGILIANEQLAKRYLELGALFVAVGVDTTLLARAAEALAARFGAQATAVKPGVY</sequence>
<feature type="chain" id="PRO_0000207095" description="4-hydroxy-2-oxo-heptane-1,7-dioate aldolase">
    <location>
        <begin position="1"/>
        <end position="262"/>
    </location>
</feature>
<feature type="active site" description="Proton acceptor" evidence="2 3">
    <location>
        <position position="45"/>
    </location>
</feature>
<feature type="binding site" evidence="6">
    <location>
        <position position="147"/>
    </location>
    <ligand>
        <name>substrate</name>
    </ligand>
</feature>
<feature type="binding site" evidence="2">
    <location>
        <position position="149"/>
    </location>
    <ligand>
        <name>a divalent metal cation</name>
        <dbReference type="ChEBI" id="CHEBI:60240"/>
    </ligand>
</feature>
<feature type="binding site" evidence="6">
    <location>
        <position position="174"/>
    </location>
    <ligand>
        <name>substrate</name>
    </ligand>
</feature>
<feature type="binding site" evidence="2">
    <location>
        <position position="175"/>
    </location>
    <ligand>
        <name>a divalent metal cation</name>
        <dbReference type="ChEBI" id="CHEBI:60240"/>
    </ligand>
</feature>
<feature type="binding site" evidence="6">
    <location>
        <position position="175"/>
    </location>
    <ligand>
        <name>substrate</name>
    </ligand>
</feature>
<feature type="site" description="Transition state stabilizer" evidence="6">
    <location>
        <position position="70"/>
    </location>
</feature>
<feature type="site" description="Increases basicity of active site His" evidence="6">
    <location>
        <position position="84"/>
    </location>
</feature>
<feature type="mutagenesis site" description="Loss of activity." evidence="2 3">
    <original>H</original>
    <variation>A</variation>
    <variation>Q</variation>
    <location>
        <position position="45"/>
    </location>
</feature>
<feature type="mutagenesis site" description="Loss of activity. Still able to bind pyruvate." evidence="1">
    <original>R</original>
    <variation>A</variation>
    <location>
        <position position="70"/>
    </location>
</feature>
<feature type="helix" evidence="7">
    <location>
        <begin position="4"/>
        <end position="10"/>
    </location>
</feature>
<feature type="strand" evidence="7">
    <location>
        <begin position="15"/>
        <end position="20"/>
    </location>
</feature>
<feature type="helix" evidence="7">
    <location>
        <begin position="25"/>
        <end position="32"/>
    </location>
</feature>
<feature type="strand" evidence="7">
    <location>
        <begin position="37"/>
        <end position="47"/>
    </location>
</feature>
<feature type="helix" evidence="7">
    <location>
        <begin position="50"/>
        <end position="60"/>
    </location>
</feature>
<feature type="strand" evidence="7">
    <location>
        <begin position="63"/>
        <end position="70"/>
    </location>
</feature>
<feature type="strand" evidence="7">
    <location>
        <begin position="72"/>
        <end position="74"/>
    </location>
</feature>
<feature type="helix" evidence="7">
    <location>
        <begin position="76"/>
        <end position="84"/>
    </location>
</feature>
<feature type="strand" evidence="7">
    <location>
        <begin position="89"/>
        <end position="93"/>
    </location>
</feature>
<feature type="helix" evidence="7">
    <location>
        <begin position="98"/>
        <end position="107"/>
    </location>
</feature>
<feature type="turn" evidence="7">
    <location>
        <begin position="111"/>
        <end position="113"/>
    </location>
</feature>
<feature type="helix" evidence="7">
    <location>
        <begin position="118"/>
        <end position="120"/>
    </location>
</feature>
<feature type="turn" evidence="7">
    <location>
        <begin position="121"/>
        <end position="123"/>
    </location>
</feature>
<feature type="helix" evidence="7">
    <location>
        <begin position="124"/>
        <end position="126"/>
    </location>
</feature>
<feature type="turn" evidence="7">
    <location>
        <begin position="127"/>
        <end position="130"/>
    </location>
</feature>
<feature type="helix" evidence="7">
    <location>
        <begin position="134"/>
        <end position="141"/>
    </location>
</feature>
<feature type="strand" evidence="7">
    <location>
        <begin position="143"/>
        <end position="148"/>
    </location>
</feature>
<feature type="helix" evidence="7">
    <location>
        <begin position="151"/>
        <end position="155"/>
    </location>
</feature>
<feature type="helix" evidence="7">
    <location>
        <begin position="157"/>
        <end position="161"/>
    </location>
</feature>
<feature type="strand" evidence="7">
    <location>
        <begin position="166"/>
        <end position="171"/>
    </location>
</feature>
<feature type="helix" evidence="7">
    <location>
        <begin position="173"/>
        <end position="179"/>
    </location>
</feature>
<feature type="helix" evidence="7">
    <location>
        <begin position="189"/>
        <end position="204"/>
    </location>
</feature>
<feature type="strand" evidence="7">
    <location>
        <begin position="207"/>
        <end position="212"/>
    </location>
</feature>
<feature type="helix" evidence="7">
    <location>
        <begin position="216"/>
        <end position="224"/>
    </location>
</feature>
<feature type="strand" evidence="7">
    <location>
        <begin position="228"/>
        <end position="234"/>
    </location>
</feature>
<feature type="helix" evidence="7">
    <location>
        <begin position="235"/>
        <end position="257"/>
    </location>
</feature>
<proteinExistence type="evidence at protein level"/>